<sequence length="132" mass="14832">MAKEYSRTQRIGDQMQRELAELIRREVKDPRVGLVTITAVDVSRDLGHAKVFITVMGEETPDAVQQSLKALNSAASFLRLHLGRSMQLRSVPQLHFHFDESVSRGVHLSALIERAVAEDRLHKDADESGTKE</sequence>
<comment type="function">
    <text evidence="1">One of several proteins that assist in the late maturation steps of the functional core of the 30S ribosomal subunit. Associates with free 30S ribosomal subunits (but not with 30S subunits that are part of 70S ribosomes or polysomes). Required for efficient processing of 16S rRNA. May interact with the 5'-terminal helix region of 16S rRNA.</text>
</comment>
<comment type="subunit">
    <text evidence="1">Monomer. Binds 30S ribosomal subunits, but not 50S ribosomal subunits or 70S ribosomes.</text>
</comment>
<comment type="subcellular location">
    <subcellularLocation>
        <location evidence="1">Cytoplasm</location>
    </subcellularLocation>
</comment>
<comment type="similarity">
    <text evidence="1">Belongs to the RbfA family.</text>
</comment>
<name>RBFA_PSEPG</name>
<protein>
    <recommendedName>
        <fullName evidence="1">Ribosome-binding factor A</fullName>
    </recommendedName>
</protein>
<keyword id="KW-0963">Cytoplasm</keyword>
<keyword id="KW-0690">Ribosome biogenesis</keyword>
<feature type="chain" id="PRO_1000073773" description="Ribosome-binding factor A">
    <location>
        <begin position="1"/>
        <end position="132"/>
    </location>
</feature>
<reference key="1">
    <citation type="submission" date="2008-01" db="EMBL/GenBank/DDBJ databases">
        <title>Complete sequence of Pseudomonas putida GB-1.</title>
        <authorList>
            <consortium name="US DOE Joint Genome Institute"/>
            <person name="Copeland A."/>
            <person name="Lucas S."/>
            <person name="Lapidus A."/>
            <person name="Barry K."/>
            <person name="Glavina del Rio T."/>
            <person name="Dalin E."/>
            <person name="Tice H."/>
            <person name="Pitluck S."/>
            <person name="Bruce D."/>
            <person name="Goodwin L."/>
            <person name="Chertkov O."/>
            <person name="Brettin T."/>
            <person name="Detter J.C."/>
            <person name="Han C."/>
            <person name="Kuske C.R."/>
            <person name="Schmutz J."/>
            <person name="Larimer F."/>
            <person name="Land M."/>
            <person name="Hauser L."/>
            <person name="Kyrpides N."/>
            <person name="Kim E."/>
            <person name="McCarthy J.K."/>
            <person name="Richardson P."/>
        </authorList>
    </citation>
    <scope>NUCLEOTIDE SEQUENCE [LARGE SCALE GENOMIC DNA]</scope>
    <source>
        <strain>GB-1</strain>
    </source>
</reference>
<evidence type="ECO:0000255" key="1">
    <source>
        <dbReference type="HAMAP-Rule" id="MF_00003"/>
    </source>
</evidence>
<accession>B0KHX7</accession>
<dbReference type="EMBL" id="CP000926">
    <property type="protein sequence ID" value="ABZ00598.1"/>
    <property type="molecule type" value="Genomic_DNA"/>
</dbReference>
<dbReference type="RefSeq" id="WP_012274243.1">
    <property type="nucleotide sequence ID" value="NC_010322.1"/>
</dbReference>
<dbReference type="SMR" id="B0KHX7"/>
<dbReference type="GeneID" id="93440707"/>
<dbReference type="KEGG" id="ppg:PputGB1_4711"/>
<dbReference type="eggNOG" id="COG0858">
    <property type="taxonomic scope" value="Bacteria"/>
</dbReference>
<dbReference type="HOGENOM" id="CLU_089475_5_0_6"/>
<dbReference type="Proteomes" id="UP000002157">
    <property type="component" value="Chromosome"/>
</dbReference>
<dbReference type="GO" id="GO:0005829">
    <property type="term" value="C:cytosol"/>
    <property type="evidence" value="ECO:0007669"/>
    <property type="project" value="TreeGrafter"/>
</dbReference>
<dbReference type="GO" id="GO:0043024">
    <property type="term" value="F:ribosomal small subunit binding"/>
    <property type="evidence" value="ECO:0007669"/>
    <property type="project" value="TreeGrafter"/>
</dbReference>
<dbReference type="GO" id="GO:0030490">
    <property type="term" value="P:maturation of SSU-rRNA"/>
    <property type="evidence" value="ECO:0007669"/>
    <property type="project" value="UniProtKB-UniRule"/>
</dbReference>
<dbReference type="Gene3D" id="3.30.300.20">
    <property type="match status" value="1"/>
</dbReference>
<dbReference type="HAMAP" id="MF_00003">
    <property type="entry name" value="RbfA"/>
    <property type="match status" value="1"/>
</dbReference>
<dbReference type="InterPro" id="IPR015946">
    <property type="entry name" value="KH_dom-like_a/b"/>
</dbReference>
<dbReference type="InterPro" id="IPR000238">
    <property type="entry name" value="RbfA"/>
</dbReference>
<dbReference type="InterPro" id="IPR023799">
    <property type="entry name" value="RbfA_dom_sf"/>
</dbReference>
<dbReference type="InterPro" id="IPR020053">
    <property type="entry name" value="Ribosome-bd_factorA_CS"/>
</dbReference>
<dbReference type="NCBIfam" id="TIGR00082">
    <property type="entry name" value="rbfA"/>
    <property type="match status" value="1"/>
</dbReference>
<dbReference type="PANTHER" id="PTHR33515">
    <property type="entry name" value="RIBOSOME-BINDING FACTOR A, CHLOROPLASTIC-RELATED"/>
    <property type="match status" value="1"/>
</dbReference>
<dbReference type="PANTHER" id="PTHR33515:SF1">
    <property type="entry name" value="RIBOSOME-BINDING FACTOR A, CHLOROPLASTIC-RELATED"/>
    <property type="match status" value="1"/>
</dbReference>
<dbReference type="Pfam" id="PF02033">
    <property type="entry name" value="RBFA"/>
    <property type="match status" value="1"/>
</dbReference>
<dbReference type="SUPFAM" id="SSF89919">
    <property type="entry name" value="Ribosome-binding factor A, RbfA"/>
    <property type="match status" value="1"/>
</dbReference>
<dbReference type="PROSITE" id="PS01319">
    <property type="entry name" value="RBFA"/>
    <property type="match status" value="1"/>
</dbReference>
<organism>
    <name type="scientific">Pseudomonas putida (strain GB-1)</name>
    <dbReference type="NCBI Taxonomy" id="76869"/>
    <lineage>
        <taxon>Bacteria</taxon>
        <taxon>Pseudomonadati</taxon>
        <taxon>Pseudomonadota</taxon>
        <taxon>Gammaproteobacteria</taxon>
        <taxon>Pseudomonadales</taxon>
        <taxon>Pseudomonadaceae</taxon>
        <taxon>Pseudomonas</taxon>
    </lineage>
</organism>
<proteinExistence type="inferred from homology"/>
<gene>
    <name evidence="1" type="primary">rbfA</name>
    <name type="ordered locus">PputGB1_4711</name>
</gene>